<proteinExistence type="inferred from homology"/>
<gene>
    <name evidence="2" type="primary">talA</name>
    <name type="ordered locus">STY2710</name>
    <name type="ordered locus">t0386</name>
</gene>
<feature type="chain" id="PRO_0000173611" description="Transaldolase A">
    <location>
        <begin position="1"/>
        <end position="316"/>
    </location>
</feature>
<feature type="active site" description="Schiff-base intermediate with substrate" evidence="2">
    <location>
        <position position="131"/>
    </location>
</feature>
<feature type="sequence conflict" description="In Ref. 2; AAO68104." evidence="3" ref="2">
    <original>A</original>
    <variation>V</variation>
    <location>
        <position position="98"/>
    </location>
</feature>
<organism>
    <name type="scientific">Salmonella typhi</name>
    <dbReference type="NCBI Taxonomy" id="90370"/>
    <lineage>
        <taxon>Bacteria</taxon>
        <taxon>Pseudomonadati</taxon>
        <taxon>Pseudomonadota</taxon>
        <taxon>Gammaproteobacteria</taxon>
        <taxon>Enterobacterales</taxon>
        <taxon>Enterobacteriaceae</taxon>
        <taxon>Salmonella</taxon>
    </lineage>
</organism>
<protein>
    <recommendedName>
        <fullName evidence="2">Transaldolase A</fullName>
        <ecNumber evidence="2">2.2.1.2</ecNumber>
    </recommendedName>
</protein>
<sequence length="316" mass="35722">MNQLDGIKQFTTVVADSGDIESIRHYQPQDATTNPSLLLKAAGLEQYGHLIEDAIAWGKKHGGTQEQQVAAASDKLAVNFGAEILKSIPGRVSTEVDARLSFDKEKSIEKARHLVDLYQQQDVDKSRILIKLAATWEGIRAAEQLEKEGINCNLTLLFSFAQARACAEAGVYLISPFVGRIYDWYQARSPLEPYVVEEDPGVKSVRNIYDYFKQHRYETIVMGASFRRTEQILALTGCDRLTISPNLLKELKEKEEPVIRKLVPSSQMFHRPTPMTEAEFRWEHNQDAMAVEKLSEGIRLFAVDQRKLEDLLAAKL</sequence>
<keyword id="KW-0963">Cytoplasm</keyword>
<keyword id="KW-0570">Pentose shunt</keyword>
<keyword id="KW-0704">Schiff base</keyword>
<keyword id="KW-0808">Transferase</keyword>
<accession>Q8Z4T0</accession>
<name>TALA_SALTI</name>
<dbReference type="EC" id="2.2.1.2" evidence="2"/>
<dbReference type="EMBL" id="AL513382">
    <property type="protein sequence ID" value="CAD07703.1"/>
    <property type="molecule type" value="Genomic_DNA"/>
</dbReference>
<dbReference type="EMBL" id="AE014613">
    <property type="protein sequence ID" value="AAO68104.1"/>
    <property type="molecule type" value="Genomic_DNA"/>
</dbReference>
<dbReference type="RefSeq" id="NP_457007.1">
    <property type="nucleotide sequence ID" value="NC_003198.1"/>
</dbReference>
<dbReference type="SMR" id="Q8Z4T0"/>
<dbReference type="STRING" id="220341.gene:17586607"/>
<dbReference type="KEGG" id="stt:t0386"/>
<dbReference type="KEGG" id="sty:STY2710"/>
<dbReference type="PATRIC" id="fig|220341.7.peg.2748"/>
<dbReference type="eggNOG" id="COG0176">
    <property type="taxonomic scope" value="Bacteria"/>
</dbReference>
<dbReference type="HOGENOM" id="CLU_047470_0_1_6"/>
<dbReference type="OMA" id="ITCNITL"/>
<dbReference type="OrthoDB" id="9809101at2"/>
<dbReference type="UniPathway" id="UPA00115">
    <property type="reaction ID" value="UER00414"/>
</dbReference>
<dbReference type="Proteomes" id="UP000000541">
    <property type="component" value="Chromosome"/>
</dbReference>
<dbReference type="Proteomes" id="UP000002670">
    <property type="component" value="Chromosome"/>
</dbReference>
<dbReference type="GO" id="GO:0005829">
    <property type="term" value="C:cytosol"/>
    <property type="evidence" value="ECO:0007669"/>
    <property type="project" value="TreeGrafter"/>
</dbReference>
<dbReference type="GO" id="GO:0004801">
    <property type="term" value="F:transaldolase activity"/>
    <property type="evidence" value="ECO:0000250"/>
    <property type="project" value="UniProtKB"/>
</dbReference>
<dbReference type="GO" id="GO:0005975">
    <property type="term" value="P:carbohydrate metabolic process"/>
    <property type="evidence" value="ECO:0007669"/>
    <property type="project" value="InterPro"/>
</dbReference>
<dbReference type="GO" id="GO:0006098">
    <property type="term" value="P:pentose-phosphate shunt"/>
    <property type="evidence" value="ECO:0007669"/>
    <property type="project" value="UniProtKB-UniRule"/>
</dbReference>
<dbReference type="CDD" id="cd00957">
    <property type="entry name" value="Transaldolase_TalAB"/>
    <property type="match status" value="1"/>
</dbReference>
<dbReference type="FunFam" id="3.20.20.70:FF:000002">
    <property type="entry name" value="Transaldolase"/>
    <property type="match status" value="1"/>
</dbReference>
<dbReference type="Gene3D" id="3.20.20.70">
    <property type="entry name" value="Aldolase class I"/>
    <property type="match status" value="1"/>
</dbReference>
<dbReference type="HAMAP" id="MF_00492">
    <property type="entry name" value="Transaldolase_1"/>
    <property type="match status" value="1"/>
</dbReference>
<dbReference type="InterPro" id="IPR013785">
    <property type="entry name" value="Aldolase_TIM"/>
</dbReference>
<dbReference type="InterPro" id="IPR001585">
    <property type="entry name" value="TAL/FSA"/>
</dbReference>
<dbReference type="InterPro" id="IPR004730">
    <property type="entry name" value="Transaldolase_1"/>
</dbReference>
<dbReference type="InterPro" id="IPR018225">
    <property type="entry name" value="Transaldolase_AS"/>
</dbReference>
<dbReference type="NCBIfam" id="NF009001">
    <property type="entry name" value="PRK12346.1"/>
    <property type="match status" value="1"/>
</dbReference>
<dbReference type="NCBIfam" id="TIGR00874">
    <property type="entry name" value="talAB"/>
    <property type="match status" value="1"/>
</dbReference>
<dbReference type="PANTHER" id="PTHR10683">
    <property type="entry name" value="TRANSALDOLASE"/>
    <property type="match status" value="1"/>
</dbReference>
<dbReference type="PANTHER" id="PTHR10683:SF16">
    <property type="entry name" value="TRANSALDOLASE A"/>
    <property type="match status" value="1"/>
</dbReference>
<dbReference type="Pfam" id="PF00923">
    <property type="entry name" value="TAL_FSA"/>
    <property type="match status" value="1"/>
</dbReference>
<dbReference type="SUPFAM" id="SSF51569">
    <property type="entry name" value="Aldolase"/>
    <property type="match status" value="1"/>
</dbReference>
<dbReference type="PROSITE" id="PS01054">
    <property type="entry name" value="TRANSALDOLASE_1"/>
    <property type="match status" value="1"/>
</dbReference>
<dbReference type="PROSITE" id="PS00958">
    <property type="entry name" value="TRANSALDOLASE_2"/>
    <property type="match status" value="1"/>
</dbReference>
<comment type="function">
    <text evidence="2">Transaldolase is important for the balance of metabolites in the pentose-phosphate pathway.</text>
</comment>
<comment type="catalytic activity">
    <reaction evidence="2">
        <text>D-sedoheptulose 7-phosphate + D-glyceraldehyde 3-phosphate = D-erythrose 4-phosphate + beta-D-fructose 6-phosphate</text>
        <dbReference type="Rhea" id="RHEA:17053"/>
        <dbReference type="ChEBI" id="CHEBI:16897"/>
        <dbReference type="ChEBI" id="CHEBI:57483"/>
        <dbReference type="ChEBI" id="CHEBI:57634"/>
        <dbReference type="ChEBI" id="CHEBI:59776"/>
        <dbReference type="EC" id="2.2.1.2"/>
    </reaction>
</comment>
<comment type="pathway">
    <text evidence="2">Carbohydrate degradation; pentose phosphate pathway; D-glyceraldehyde 3-phosphate and beta-D-fructose 6-phosphate from D-ribose 5-phosphate and D-xylulose 5-phosphate (non-oxidative stage): step 2/3.</text>
</comment>
<comment type="subunit">
    <text evidence="1">Homodimer.</text>
</comment>
<comment type="subcellular location">
    <subcellularLocation>
        <location evidence="2">Cytoplasm</location>
    </subcellularLocation>
</comment>
<comment type="similarity">
    <text evidence="2">Belongs to the transaldolase family. Type 1 subfamily.</text>
</comment>
<reference key="1">
    <citation type="journal article" date="2001" name="Nature">
        <title>Complete genome sequence of a multiple drug resistant Salmonella enterica serovar Typhi CT18.</title>
        <authorList>
            <person name="Parkhill J."/>
            <person name="Dougan G."/>
            <person name="James K.D."/>
            <person name="Thomson N.R."/>
            <person name="Pickard D."/>
            <person name="Wain J."/>
            <person name="Churcher C.M."/>
            <person name="Mungall K.L."/>
            <person name="Bentley S.D."/>
            <person name="Holden M.T.G."/>
            <person name="Sebaihia M."/>
            <person name="Baker S."/>
            <person name="Basham D."/>
            <person name="Brooks K."/>
            <person name="Chillingworth T."/>
            <person name="Connerton P."/>
            <person name="Cronin A."/>
            <person name="Davis P."/>
            <person name="Davies R.M."/>
            <person name="Dowd L."/>
            <person name="White N."/>
            <person name="Farrar J."/>
            <person name="Feltwell T."/>
            <person name="Hamlin N."/>
            <person name="Haque A."/>
            <person name="Hien T.T."/>
            <person name="Holroyd S."/>
            <person name="Jagels K."/>
            <person name="Krogh A."/>
            <person name="Larsen T.S."/>
            <person name="Leather S."/>
            <person name="Moule S."/>
            <person name="O'Gaora P."/>
            <person name="Parry C."/>
            <person name="Quail M.A."/>
            <person name="Rutherford K.M."/>
            <person name="Simmonds M."/>
            <person name="Skelton J."/>
            <person name="Stevens K."/>
            <person name="Whitehead S."/>
            <person name="Barrell B.G."/>
        </authorList>
    </citation>
    <scope>NUCLEOTIDE SEQUENCE [LARGE SCALE GENOMIC DNA]</scope>
    <source>
        <strain>CT18</strain>
    </source>
</reference>
<reference key="2">
    <citation type="journal article" date="2003" name="J. Bacteriol.">
        <title>Comparative genomics of Salmonella enterica serovar Typhi strains Ty2 and CT18.</title>
        <authorList>
            <person name="Deng W."/>
            <person name="Liou S.-R."/>
            <person name="Plunkett G. III"/>
            <person name="Mayhew G.F."/>
            <person name="Rose D.J."/>
            <person name="Burland V."/>
            <person name="Kodoyianni V."/>
            <person name="Schwartz D.C."/>
            <person name="Blattner F.R."/>
        </authorList>
    </citation>
    <scope>NUCLEOTIDE SEQUENCE [LARGE SCALE GENOMIC DNA]</scope>
    <source>
        <strain>ATCC 700931 / Ty2</strain>
    </source>
</reference>
<evidence type="ECO:0000250" key="1"/>
<evidence type="ECO:0000255" key="2">
    <source>
        <dbReference type="HAMAP-Rule" id="MF_00492"/>
    </source>
</evidence>
<evidence type="ECO:0000305" key="3"/>